<proteinExistence type="evidence at protein level"/>
<name>LARG2_HUMAN</name>
<comment type="function">
    <text evidence="2 6 7 10">Bifunctional glycosyltransferase with both alpha-1,3-xylosyltransferase and beta-1,3-glucuronyltransferase activities involved in the maturation of alpha-dystroglycan (DAG1) by glycosylation leading to DAG1 binding to laminin G-like domain-containing extracellular proteins with high affinity and in a phosphorylated-O-mannosyl trisaccharide dependent manner (PubMed:15661757, PubMed:15752776, PubMed:25138275). Elongates the glucuronyl-beta-1,4-xylose-beta disaccharide primer structure by adding repeating units [-3-Xylose-alpha-1,3-GlcA-beta-1-] to produce a heteropolysaccharide (By similarity). Supports the maturation of DAG1 more effectively than LARGE1 (PubMed:15752776). In addition, can modify both heparan sulfate (HS)- and chondroitin/dermatan sulfate (CS/DS)-proteoglycans (PGs), namely GPC4, with a glycosaminoglycan (GAG)-like polysaccharide composed of xylose and glucuronic acid to confer laminin binding (By similarity).</text>
</comment>
<comment type="catalytic activity">
    <reaction evidence="2">
        <text>3-O-[beta-D-GlcA-(1-&gt;3)-beta-D-Xyl-(1-&gt;4)-Rib-ol-P-Rib-ol-P-3-beta-D-GalNAc-(1-&gt;3)-beta-D-GlcNAc-(1-&gt;4)-(O-6-P-alpha-D-Man)]-Thr-[protein] + UDP-alpha-D-xylose = 3-O-[alpha-D-Xyl-(1-&gt;3)-beta-D-GlcA-(1-&gt;4)-beta-D-Xyl-(1-&gt;4)-Rib-ol-P-Rib-ol-P-3-beta-D-GalNAc-(1-&gt;3)-beta-D-GlcNAc-(1-&gt;4)-(O-6-P-alpha-D-Man)]-Thr-[protein] + UDP + H(+)</text>
        <dbReference type="Rhea" id="RHEA:57336"/>
        <dbReference type="Rhea" id="RHEA-COMP:17482"/>
        <dbReference type="Rhea" id="RHEA-COMP:17483"/>
        <dbReference type="ChEBI" id="CHEBI:15378"/>
        <dbReference type="ChEBI" id="CHEBI:57632"/>
        <dbReference type="ChEBI" id="CHEBI:58223"/>
        <dbReference type="ChEBI" id="CHEBI:177336"/>
        <dbReference type="ChEBI" id="CHEBI:177352"/>
    </reaction>
    <physiologicalReaction direction="left-to-right" evidence="2">
        <dbReference type="Rhea" id="RHEA:57337"/>
    </physiologicalReaction>
</comment>
<comment type="catalytic activity">
    <reaction evidence="2">
        <text>3-O-{(1-&gt;[3)-alpha-D-Xyl-(1-&gt;3)-beta-D-GlcA-(1-&gt;](n)-4)-beta-D-Xyl-(1-&gt;4)-Rib-ol-P-Rib-ol-P-3-beta-D-GalNAc-(1-&gt;3)-beta-D-GlcNAc-(1-&gt;4)-O-6-P-alpha-D-Man}-L-Thr-[protein] + UDP-alpha-D-glucuronate = 3-O-{beta-D-GlcA-(1-&gt;[3)-alpha-D-Xyl-(1-&gt;3)-beta-D-GlcA-(1-&gt;](n)-4)-beta-D-Xyl-(1-&gt;4)-Rib-ol-P-Rib-ol-P-3-beta-D-GalNAc-(1-&gt;3)-beta-D-GlcNAc-(1-&gt;4)-O-6-P-alpha-D-Man}-L-Thr-[protein] + UDP + H(+)</text>
        <dbReference type="Rhea" id="RHEA:67924"/>
        <dbReference type="Rhea" id="RHEA-COMP:17484"/>
        <dbReference type="Rhea" id="RHEA-COMP:17486"/>
        <dbReference type="ChEBI" id="CHEBI:15378"/>
        <dbReference type="ChEBI" id="CHEBI:58052"/>
        <dbReference type="ChEBI" id="CHEBI:58223"/>
        <dbReference type="ChEBI" id="CHEBI:177354"/>
        <dbReference type="ChEBI" id="CHEBI:177355"/>
    </reaction>
    <physiologicalReaction direction="left-to-right" evidence="2">
        <dbReference type="Rhea" id="RHEA:67925"/>
    </physiologicalReaction>
</comment>
<comment type="catalytic activity">
    <reaction evidence="2">
        <text>3-O-{beta-D-GlcA-(1-&gt;[3)-alpha-D-Xyl-(1-&gt;3)-beta-D-GlcA-(1-&gt;](n)-4)-beta-D-Xyl-(1-&gt;4)-Rib-ol-P-Rib-ol-P-3-beta-D-GalNAc-(1-&gt;3)-beta-D-GlcNAc-(1-&gt;4)-O-6-P-alpha-D-Man}-L-Thr-[protein] + UDP-alpha-D-xylose = 3-O-{(1-&gt;[3)-alpha-D-Xyl-(1-&gt;3)-beta-D-GlcA-(1-&gt;](n+1)-4)-beta-D-Xyl-(1-&gt;4)-Rib-ol-P-Rib-ol-P-3-beta-D-GalNAc-(1-&gt;3)-beta-D-GlcNAc-(1-&gt;4)-O-6-P-alpha-D-Man}-L-Thr-[protein] + UDP + H(+)</text>
        <dbReference type="Rhea" id="RHEA:68368"/>
        <dbReference type="Rhea" id="RHEA-COMP:17485"/>
        <dbReference type="Rhea" id="RHEA-COMP:17486"/>
        <dbReference type="ChEBI" id="CHEBI:15378"/>
        <dbReference type="ChEBI" id="CHEBI:57632"/>
        <dbReference type="ChEBI" id="CHEBI:58223"/>
        <dbReference type="ChEBI" id="CHEBI:177354"/>
        <dbReference type="ChEBI" id="CHEBI:177355"/>
    </reaction>
    <physiologicalReaction direction="left-to-right" evidence="2">
        <dbReference type="Rhea" id="RHEA:68369"/>
    </physiologicalReaction>
</comment>
<comment type="cofactor">
    <cofactor evidence="12">
        <name>Mn(2+)</name>
        <dbReference type="ChEBI" id="CHEBI:29035"/>
    </cofactor>
    <text evidence="12">Binds 2 Mn(2+) ions per subunit. The xylosyltransferase part binds one Mn(2+) and the beta-1,3-glucuronyltransferase part binds one Mn(2+).</text>
</comment>
<comment type="pathway">
    <text evidence="6 7 10">Protein modification; protein glycosylation.</text>
</comment>
<comment type="subunit">
    <text evidence="9">Interacts with B4GAT1.</text>
</comment>
<comment type="interaction">
    <interactant intactId="EBI-2839174">
        <id>Q8N3Y3</id>
    </interactant>
    <interactant intactId="EBI-6138697">
        <id>O43505</id>
        <label>B4GAT1</label>
    </interactant>
    <organismsDiffer>false</organismsDiffer>
    <experiments>3</experiments>
</comment>
<comment type="subcellular location">
    <subcellularLocation>
        <location evidence="6">Golgi apparatus membrane</location>
        <topology evidence="11">Single-pass type II membrane protein</topology>
    </subcellularLocation>
</comment>
<comment type="tissue specificity">
    <text evidence="7 8">Widely expressed. Expressed at high level in placenta, pancreas and kidney compared to LARGE. Not expressed in brain.</text>
</comment>
<comment type="similarity">
    <text evidence="11">In the C-terminal section; belongs to the glycosyltransferase 49 family.</text>
</comment>
<comment type="similarity">
    <text evidence="11">In the N-terminal section; belongs to the glycosyltransferase 8 family.</text>
</comment>
<comment type="sequence caution" evidence="11">
    <conflict type="frameshift">
        <sequence resource="EMBL-CDS" id="AAG23791"/>
    </conflict>
</comment>
<comment type="sequence caution" evidence="11">
    <conflict type="miscellaneous discrepancy">
        <sequence resource="EMBL-CDS" id="BAC03909"/>
    </conflict>
    <text>Probable cloning artifact.</text>
</comment>
<comment type="online information" name="Functional Glycomics Gateway - GTase">
    <link uri="http://www.functionalglycomics.org/glycomics/molecule/jsp/glycoEnzyme/viewGlycoEnzyme.jsp?gbpId=gt_hum_550"/>
    <text>Glycosyltransferase-like protein LARGE2</text>
</comment>
<evidence type="ECO:0000250" key="1">
    <source>
        <dbReference type="UniProtKB" id="O95461"/>
    </source>
</evidence>
<evidence type="ECO:0000250" key="2">
    <source>
        <dbReference type="UniProtKB" id="Q5XPT3"/>
    </source>
</evidence>
<evidence type="ECO:0000255" key="3"/>
<evidence type="ECO:0000256" key="4">
    <source>
        <dbReference type="SAM" id="MobiDB-lite"/>
    </source>
</evidence>
<evidence type="ECO:0000269" key="5">
    <source>
    </source>
</evidence>
<evidence type="ECO:0000269" key="6">
    <source>
    </source>
</evidence>
<evidence type="ECO:0000269" key="7">
    <source>
    </source>
</evidence>
<evidence type="ECO:0000269" key="8">
    <source>
    </source>
</evidence>
<evidence type="ECO:0000269" key="9">
    <source>
    </source>
</evidence>
<evidence type="ECO:0000269" key="10">
    <source>
    </source>
</evidence>
<evidence type="ECO:0000305" key="11"/>
<evidence type="ECO:0000305" key="12">
    <source>
    </source>
</evidence>
<evidence type="ECO:0000312" key="13">
    <source>
        <dbReference type="HGNC" id="HGNC:16522"/>
    </source>
</evidence>
<protein>
    <recommendedName>
        <fullName evidence="11">Xylosyl- and glucuronyltransferase LARGE2</fullName>
        <ecNumber evidence="2">2.4.-.-</ecNumber>
    </recommendedName>
    <alternativeName>
        <fullName>Glycosyltransferase-like 1B</fullName>
    </alternativeName>
    <alternativeName>
        <fullName evidence="13">LARGE xylosyl- and glucuronyltransferase 2</fullName>
    </alternativeName>
    <domain>
        <recommendedName>
            <fullName evidence="11">Alpha-1,3-xylosyltransferase LARGE2</fullName>
            <ecNumber evidence="2">2.4.2.-</ecNumber>
        </recommendedName>
    </domain>
    <domain>
        <recommendedName>
            <fullName evidence="11">Beta-1,3-glucuronyltransferase LARGE2</fullName>
            <ecNumber evidence="2">2.4.1.-</ecNumber>
        </recommendedName>
    </domain>
</protein>
<keyword id="KW-0325">Glycoprotein</keyword>
<keyword id="KW-0328">Glycosyltransferase</keyword>
<keyword id="KW-0333">Golgi apparatus</keyword>
<keyword id="KW-0464">Manganese</keyword>
<keyword id="KW-0472">Membrane</keyword>
<keyword id="KW-0479">Metal-binding</keyword>
<keyword id="KW-0511">Multifunctional enzyme</keyword>
<keyword id="KW-1267">Proteomics identification</keyword>
<keyword id="KW-1185">Reference proteome</keyword>
<keyword id="KW-0735">Signal-anchor</keyword>
<keyword id="KW-0808">Transferase</keyword>
<keyword id="KW-0812">Transmembrane</keyword>
<keyword id="KW-1133">Transmembrane helix</keyword>
<feature type="chain" id="PRO_0000226811" description="Xylosyl- and glucuronyltransferase LARGE2">
    <location>
        <begin position="1"/>
        <end position="721"/>
    </location>
</feature>
<feature type="topological domain" description="Cytoplasmic" evidence="3">
    <location>
        <begin position="1"/>
        <end position="8"/>
    </location>
</feature>
<feature type="transmembrane region" description="Helical; Signal-anchor for type II membrane protein" evidence="3">
    <location>
        <begin position="9"/>
        <end position="29"/>
    </location>
</feature>
<feature type="topological domain" description="Lumenal" evidence="3">
    <location>
        <begin position="30"/>
        <end position="721"/>
    </location>
</feature>
<feature type="region of interest" description="Disordered" evidence="4">
    <location>
        <begin position="59"/>
        <end position="89"/>
    </location>
</feature>
<feature type="region of interest" description="Xylosyltransferase activity" evidence="1">
    <location>
        <begin position="97"/>
        <end position="372"/>
    </location>
</feature>
<feature type="region of interest" description="Glucuronyltransferase activity" evidence="1">
    <location>
        <begin position="373"/>
        <end position="715"/>
    </location>
</feature>
<feature type="binding site" evidence="12">
    <location>
        <position position="201"/>
    </location>
    <ligand>
        <name>Mn(2+)</name>
        <dbReference type="ChEBI" id="CHEBI:29035"/>
        <label>1</label>
    </ligand>
</feature>
<feature type="binding site" evidence="12">
    <location>
        <position position="203"/>
    </location>
    <ligand>
        <name>Mn(2+)</name>
        <dbReference type="ChEBI" id="CHEBI:29035"/>
        <label>1</label>
    </ligand>
</feature>
<feature type="binding site" evidence="12">
    <location>
        <position position="521"/>
    </location>
    <ligand>
        <name>Mn(2+)</name>
        <dbReference type="ChEBI" id="CHEBI:29035"/>
        <label>2</label>
    </ligand>
</feature>
<feature type="binding site" evidence="12">
    <location>
        <position position="523"/>
    </location>
    <ligand>
        <name>Mn(2+)</name>
        <dbReference type="ChEBI" id="CHEBI:29035"/>
        <label>2</label>
    </ligand>
</feature>
<feature type="glycosylation site" description="N-linked (GlcNAc...) asparagine" evidence="3">
    <location>
        <position position="80"/>
    </location>
</feature>
<feature type="glycosylation site" description="N-linked (GlcNAc...) asparagine" evidence="3">
    <location>
        <position position="107"/>
    </location>
</feature>
<feature type="glycosylation site" description="N-linked (GlcNAc...) asparagine" evidence="3">
    <location>
        <position position="231"/>
    </location>
</feature>
<feature type="sequence variant" id="VAR_031854" description="In dbSNP:rs17853729." evidence="5">
    <original>E</original>
    <variation>K</variation>
    <location>
        <position position="37"/>
    </location>
</feature>
<feature type="sequence variant" id="VAR_031855" description="In dbSNP:rs11038713.">
    <original>R</original>
    <variation>W</variation>
    <location>
        <position position="546"/>
    </location>
</feature>
<feature type="sequence variant" id="VAR_025518" description="In dbSNP:rs2271851.">
    <original>R</original>
    <variation>C</variation>
    <location>
        <position position="677"/>
    </location>
</feature>
<feature type="sequence conflict" description="In Ref. 1; BAC04675." evidence="11" ref="1">
    <original>Q</original>
    <variation>R</variation>
    <location>
        <position position="166"/>
    </location>
</feature>
<feature type="sequence conflict" description="In Ref. 1; BAC03909." evidence="11" ref="1">
    <original>E</original>
    <variation>G</variation>
    <location>
        <position position="398"/>
    </location>
</feature>
<feature type="sequence conflict" description="In Ref. 5; AAG23791." evidence="11" ref="5">
    <original>HF</original>
    <variation>IS</variation>
    <location>
        <begin position="473"/>
        <end position="474"/>
    </location>
</feature>
<accession>Q8N3Y3</accession>
<accession>A6NN75</accession>
<accession>Q8N8Y6</accession>
<accession>Q8NAK3</accession>
<accession>Q8WY62</accession>
<gene>
    <name evidence="13" type="primary">LARGE2</name>
    <name type="synonym">GYLTL1B</name>
    <name type="ORF">PP5656</name>
</gene>
<sequence>MLPRGRPRALGAAALLLLLLLLGFLLFGGDLGCERREPGGRAGAPGCFPGPLMPRVPPDGRLRRAAALDGDPGAGPGDHNRSDCGPQPPPPPKCELLHVAIVCAGHNSSRDVITLVKSMLFYRKNPLHLHLVTDAVARNILETLFHTWMVPAVRVSFYHADQLKPQVSWIPNKHYSGLYGLMKLVLPSALPAELARVIVLDTDVTFASDISELWALFAHFSDTQAIGLVENQSDWYLGNLWKNHRPWPALGRGFNTGVILLRLDRLRQAGWEQMWRLTARRELLSLPATSLADQDIFNAVIKEHPGLVQRLPCVWNVQLSDHTLAERCYSEASDLKVIHWNSPKKLRVKNKHVEFFRNFYLTFLEYDGNLLRRELFVCPSQPPPGAEQLQQALAQLDEEDPCFEFRQQQLTVHRVHVTFLPHEPPPPRPHDVTLVAQLSMDRLQMLEALCRHWPGPMSLALYLTDAEAQQFLHFVEASPVLAARQDVAYHVVYREGPLYPVNQLRNVALAQALTPYVFLSDIDFLPAYSLYDYLRASIEQLGLGSRRKAALVVPAFETLRYRFSFPHSKVELLALLDAGTLYTFRYHEWPRGHAPTDYARWREAQAPYRVQWAANYEPYVVVPRDCPRYDPRFVGFGWNKVAHIVELDAQEYELLVLPEAFTIHLPHAPSLDISRFRSSPTYRDCLQALKDEFHQDLSRHHGAAALKYLPALQQPQSPARG</sequence>
<reference key="1">
    <citation type="journal article" date="2004" name="Nat. Genet.">
        <title>Complete sequencing and characterization of 21,243 full-length human cDNAs.</title>
        <authorList>
            <person name="Ota T."/>
            <person name="Suzuki Y."/>
            <person name="Nishikawa T."/>
            <person name="Otsuki T."/>
            <person name="Sugiyama T."/>
            <person name="Irie R."/>
            <person name="Wakamatsu A."/>
            <person name="Hayashi K."/>
            <person name="Sato H."/>
            <person name="Nagai K."/>
            <person name="Kimura K."/>
            <person name="Makita H."/>
            <person name="Sekine M."/>
            <person name="Obayashi M."/>
            <person name="Nishi T."/>
            <person name="Shibahara T."/>
            <person name="Tanaka T."/>
            <person name="Ishii S."/>
            <person name="Yamamoto J."/>
            <person name="Saito K."/>
            <person name="Kawai Y."/>
            <person name="Isono Y."/>
            <person name="Nakamura Y."/>
            <person name="Nagahari K."/>
            <person name="Murakami K."/>
            <person name="Yasuda T."/>
            <person name="Iwayanagi T."/>
            <person name="Wagatsuma M."/>
            <person name="Shiratori A."/>
            <person name="Sudo H."/>
            <person name="Hosoiri T."/>
            <person name="Kaku Y."/>
            <person name="Kodaira H."/>
            <person name="Kondo H."/>
            <person name="Sugawara M."/>
            <person name="Takahashi M."/>
            <person name="Kanda K."/>
            <person name="Yokoi T."/>
            <person name="Furuya T."/>
            <person name="Kikkawa E."/>
            <person name="Omura Y."/>
            <person name="Abe K."/>
            <person name="Kamihara K."/>
            <person name="Katsuta N."/>
            <person name="Sato K."/>
            <person name="Tanikawa M."/>
            <person name="Yamazaki M."/>
            <person name="Ninomiya K."/>
            <person name="Ishibashi T."/>
            <person name="Yamashita H."/>
            <person name="Murakawa K."/>
            <person name="Fujimori K."/>
            <person name="Tanai H."/>
            <person name="Kimata M."/>
            <person name="Watanabe M."/>
            <person name="Hiraoka S."/>
            <person name="Chiba Y."/>
            <person name="Ishida S."/>
            <person name="Ono Y."/>
            <person name="Takiguchi S."/>
            <person name="Watanabe S."/>
            <person name="Yosida M."/>
            <person name="Hotuta T."/>
            <person name="Kusano J."/>
            <person name="Kanehori K."/>
            <person name="Takahashi-Fujii A."/>
            <person name="Hara H."/>
            <person name="Tanase T.-O."/>
            <person name="Nomura Y."/>
            <person name="Togiya S."/>
            <person name="Komai F."/>
            <person name="Hara R."/>
            <person name="Takeuchi K."/>
            <person name="Arita M."/>
            <person name="Imose N."/>
            <person name="Musashino K."/>
            <person name="Yuuki H."/>
            <person name="Oshima A."/>
            <person name="Sasaki N."/>
            <person name="Aotsuka S."/>
            <person name="Yoshikawa Y."/>
            <person name="Matsunawa H."/>
            <person name="Ichihara T."/>
            <person name="Shiohata N."/>
            <person name="Sano S."/>
            <person name="Moriya S."/>
            <person name="Momiyama H."/>
            <person name="Satoh N."/>
            <person name="Takami S."/>
            <person name="Terashima Y."/>
            <person name="Suzuki O."/>
            <person name="Nakagawa S."/>
            <person name="Senoh A."/>
            <person name="Mizoguchi H."/>
            <person name="Goto Y."/>
            <person name="Shimizu F."/>
            <person name="Wakebe H."/>
            <person name="Hishigaki H."/>
            <person name="Watanabe T."/>
            <person name="Sugiyama A."/>
            <person name="Takemoto M."/>
            <person name="Kawakami B."/>
            <person name="Yamazaki M."/>
            <person name="Watanabe K."/>
            <person name="Kumagai A."/>
            <person name="Itakura S."/>
            <person name="Fukuzumi Y."/>
            <person name="Fujimori Y."/>
            <person name="Komiyama M."/>
            <person name="Tashiro H."/>
            <person name="Tanigami A."/>
            <person name="Fujiwara T."/>
            <person name="Ono T."/>
            <person name="Yamada K."/>
            <person name="Fujii Y."/>
            <person name="Ozaki K."/>
            <person name="Hirao M."/>
            <person name="Ohmori Y."/>
            <person name="Kawabata A."/>
            <person name="Hikiji T."/>
            <person name="Kobatake N."/>
            <person name="Inagaki H."/>
            <person name="Ikema Y."/>
            <person name="Okamoto S."/>
            <person name="Okitani R."/>
            <person name="Kawakami T."/>
            <person name="Noguchi S."/>
            <person name="Itoh T."/>
            <person name="Shigeta K."/>
            <person name="Senba T."/>
            <person name="Matsumura K."/>
            <person name="Nakajima Y."/>
            <person name="Mizuno T."/>
            <person name="Morinaga M."/>
            <person name="Sasaki M."/>
            <person name="Togashi T."/>
            <person name="Oyama M."/>
            <person name="Hata H."/>
            <person name="Watanabe M."/>
            <person name="Komatsu T."/>
            <person name="Mizushima-Sugano J."/>
            <person name="Satoh T."/>
            <person name="Shirai Y."/>
            <person name="Takahashi Y."/>
            <person name="Nakagawa K."/>
            <person name="Okumura K."/>
            <person name="Nagase T."/>
            <person name="Nomura N."/>
            <person name="Kikuchi H."/>
            <person name="Masuho Y."/>
            <person name="Yamashita R."/>
            <person name="Nakai K."/>
            <person name="Yada T."/>
            <person name="Nakamura Y."/>
            <person name="Ohara O."/>
            <person name="Isogai T."/>
            <person name="Sugano S."/>
        </authorList>
    </citation>
    <scope>NUCLEOTIDE SEQUENCE [LARGE SCALE MRNA]</scope>
    <source>
        <tissue>Kidney</tissue>
    </source>
</reference>
<reference key="2">
    <citation type="journal article" date="2006" name="Nature">
        <title>Human chromosome 11 DNA sequence and analysis including novel gene identification.</title>
        <authorList>
            <person name="Taylor T.D."/>
            <person name="Noguchi H."/>
            <person name="Totoki Y."/>
            <person name="Toyoda A."/>
            <person name="Kuroki Y."/>
            <person name="Dewar K."/>
            <person name="Lloyd C."/>
            <person name="Itoh T."/>
            <person name="Takeda T."/>
            <person name="Kim D.-W."/>
            <person name="She X."/>
            <person name="Barlow K.F."/>
            <person name="Bloom T."/>
            <person name="Bruford E."/>
            <person name="Chang J.L."/>
            <person name="Cuomo C.A."/>
            <person name="Eichler E."/>
            <person name="FitzGerald M.G."/>
            <person name="Jaffe D.B."/>
            <person name="LaButti K."/>
            <person name="Nicol R."/>
            <person name="Park H.-S."/>
            <person name="Seaman C."/>
            <person name="Sougnez C."/>
            <person name="Yang X."/>
            <person name="Zimmer A.R."/>
            <person name="Zody M.C."/>
            <person name="Birren B.W."/>
            <person name="Nusbaum C."/>
            <person name="Fujiyama A."/>
            <person name="Hattori M."/>
            <person name="Rogers J."/>
            <person name="Lander E.S."/>
            <person name="Sakaki Y."/>
        </authorList>
    </citation>
    <scope>NUCLEOTIDE SEQUENCE [LARGE SCALE GENOMIC DNA]</scope>
</reference>
<reference key="3">
    <citation type="submission" date="2005-09" db="EMBL/GenBank/DDBJ databases">
        <authorList>
            <person name="Mural R.J."/>
            <person name="Istrail S."/>
            <person name="Sutton G.G."/>
            <person name="Florea L."/>
            <person name="Halpern A.L."/>
            <person name="Mobarry C.M."/>
            <person name="Lippert R."/>
            <person name="Walenz B."/>
            <person name="Shatkay H."/>
            <person name="Dew I."/>
            <person name="Miller J.R."/>
            <person name="Flanigan M.J."/>
            <person name="Edwards N.J."/>
            <person name="Bolanos R."/>
            <person name="Fasulo D."/>
            <person name="Halldorsson B.V."/>
            <person name="Hannenhalli S."/>
            <person name="Turner R."/>
            <person name="Yooseph S."/>
            <person name="Lu F."/>
            <person name="Nusskern D.R."/>
            <person name="Shue B.C."/>
            <person name="Zheng X.H."/>
            <person name="Zhong F."/>
            <person name="Delcher A.L."/>
            <person name="Huson D.H."/>
            <person name="Kravitz S.A."/>
            <person name="Mouchard L."/>
            <person name="Reinert K."/>
            <person name="Remington K.A."/>
            <person name="Clark A.G."/>
            <person name="Waterman M.S."/>
            <person name="Eichler E.E."/>
            <person name="Adams M.D."/>
            <person name="Hunkapiller M.W."/>
            <person name="Myers E.W."/>
            <person name="Venter J.C."/>
        </authorList>
    </citation>
    <scope>NUCLEOTIDE SEQUENCE [LARGE SCALE GENOMIC DNA]</scope>
</reference>
<reference key="4">
    <citation type="journal article" date="2004" name="Genome Res.">
        <title>The status, quality, and expansion of the NIH full-length cDNA project: the Mammalian Gene Collection (MGC).</title>
        <authorList>
            <consortium name="The MGC Project Team"/>
        </authorList>
    </citation>
    <scope>NUCLEOTIDE SEQUENCE [LARGE SCALE MRNA]</scope>
    <scope>VARIANT LYS-37</scope>
    <source>
        <tissue>Brain</tissue>
    </source>
</reference>
<reference key="5">
    <citation type="journal article" date="2004" name="Proc. Natl. Acad. Sci. U.S.A.">
        <title>Large-scale cDNA transfection screening for genes related to cancer development and progression.</title>
        <authorList>
            <person name="Wan D."/>
            <person name="Gong Y."/>
            <person name="Qin W."/>
            <person name="Zhang P."/>
            <person name="Li J."/>
            <person name="Wei L."/>
            <person name="Zhou X."/>
            <person name="Li H."/>
            <person name="Qiu X."/>
            <person name="Zhong F."/>
            <person name="He L."/>
            <person name="Yu J."/>
            <person name="Yao G."/>
            <person name="Jiang H."/>
            <person name="Qian L."/>
            <person name="Yu Y."/>
            <person name="Shu H."/>
            <person name="Chen X."/>
            <person name="Xu H."/>
            <person name="Guo M."/>
            <person name="Pan Z."/>
            <person name="Chen Y."/>
            <person name="Ge C."/>
            <person name="Yang S."/>
            <person name="Gu J."/>
        </authorList>
    </citation>
    <scope>NUCLEOTIDE SEQUENCE [LARGE SCALE MRNA] OF 356-721</scope>
</reference>
<reference key="6">
    <citation type="journal article" date="2005" name="Biochem. Biophys. Res. Commun.">
        <title>LARGE2 facilitates the maturation of alpha-dystroglycan more effectively than LARGE.</title>
        <authorList>
            <person name="Fujimura K."/>
            <person name="Sawaki H."/>
            <person name="Sakai T."/>
            <person name="Hiruma T."/>
            <person name="Nakanishi N."/>
            <person name="Sato T."/>
            <person name="Ohkura T."/>
            <person name="Narimatsu H."/>
        </authorList>
    </citation>
    <scope>FUNCTION</scope>
    <scope>TISSUE SPECIFICITY</scope>
</reference>
<reference key="7">
    <citation type="journal article" date="2005" name="Glycobiology">
        <title>Characterization of the LARGE family of putative glycosyltransferases associated with dystroglycanopathies.</title>
        <authorList>
            <person name="Grewal P.K."/>
            <person name="McLaughlan J.M."/>
            <person name="Moore C.J."/>
            <person name="Browning C.A."/>
            <person name="Hewitt J.E."/>
        </authorList>
    </citation>
    <scope>TISSUE SPECIFICITY</scope>
</reference>
<reference key="8">
    <citation type="journal article" date="2005" name="Hum. Mol. Genet.">
        <title>Localization and functional analysis of the LARGE family of glycosyltransferases: significance for muscular dystrophy.</title>
        <authorList>
            <person name="Brockington M."/>
            <person name="Torelli S."/>
            <person name="Prandini P."/>
            <person name="Boito C."/>
            <person name="Dolatshad N.F."/>
            <person name="Longman C."/>
            <person name="Brown S.C."/>
            <person name="Muntoni F."/>
        </authorList>
    </citation>
    <scope>FUNCTION</scope>
    <scope>SUBCELLULAR LOCATION</scope>
</reference>
<reference key="9">
    <citation type="journal article" date="2009" name="Proc. Natl. Acad. Sci. U.S.A.">
        <title>Tumor suppressor function of laminin-binding alpha-dystroglycan requires a distinct beta3-N-acetylglucosaminyltransferase.</title>
        <authorList>
            <person name="Bao X."/>
            <person name="Kobayashi M."/>
            <person name="Hatakeyama S."/>
            <person name="Angata K."/>
            <person name="Gullberg D."/>
            <person name="Nakayama J."/>
            <person name="Fukuda M.N."/>
            <person name="Fukuda M."/>
        </authorList>
    </citation>
    <scope>INTERACTION WITH B4GAT1</scope>
</reference>
<reference key="10">
    <citation type="journal article" date="2014" name="J. Biol. Chem.">
        <title>Endogenous glucuronyltransferase activity of LARGE or LARGE2 required for functional modification of alpha-dystroglycan in cells and tissues.</title>
        <authorList>
            <person name="Inamori K."/>
            <person name="Willer T."/>
            <person name="Hara Y."/>
            <person name="Venzke D."/>
            <person name="Anderson M.E."/>
            <person name="Clarke N.F."/>
            <person name="Guicheney P."/>
            <person name="Bonnemann C.G."/>
            <person name="Moore S.A."/>
            <person name="Campbell K.P."/>
        </authorList>
    </citation>
    <scope>FUNCTION</scope>
    <scope>COFACTOR</scope>
</reference>
<organism>
    <name type="scientific">Homo sapiens</name>
    <name type="common">Human</name>
    <dbReference type="NCBI Taxonomy" id="9606"/>
    <lineage>
        <taxon>Eukaryota</taxon>
        <taxon>Metazoa</taxon>
        <taxon>Chordata</taxon>
        <taxon>Craniata</taxon>
        <taxon>Vertebrata</taxon>
        <taxon>Euteleostomi</taxon>
        <taxon>Mammalia</taxon>
        <taxon>Eutheria</taxon>
        <taxon>Euarchontoglires</taxon>
        <taxon>Primates</taxon>
        <taxon>Haplorrhini</taxon>
        <taxon>Catarrhini</taxon>
        <taxon>Hominidae</taxon>
        <taxon>Homo</taxon>
    </lineage>
</organism>
<dbReference type="EC" id="2.4.-.-" evidence="2"/>
<dbReference type="EC" id="2.4.2.-" evidence="2"/>
<dbReference type="EC" id="2.4.1.-" evidence="2"/>
<dbReference type="EMBL" id="AK092526">
    <property type="protein sequence ID" value="BAC03909.1"/>
    <property type="status" value="ALT_SEQ"/>
    <property type="molecule type" value="mRNA"/>
</dbReference>
<dbReference type="EMBL" id="AK096021">
    <property type="protein sequence ID" value="BAC04675.1"/>
    <property type="molecule type" value="mRNA"/>
</dbReference>
<dbReference type="EMBL" id="AC068385">
    <property type="status" value="NOT_ANNOTATED_CDS"/>
    <property type="molecule type" value="Genomic_DNA"/>
</dbReference>
<dbReference type="EMBL" id="CH471064">
    <property type="protein sequence ID" value="EAW68021.1"/>
    <property type="molecule type" value="Genomic_DNA"/>
</dbReference>
<dbReference type="EMBL" id="BC037291">
    <property type="protein sequence ID" value="AAH37291.1"/>
    <property type="molecule type" value="mRNA"/>
</dbReference>
<dbReference type="EMBL" id="AF258588">
    <property type="protein sequence ID" value="AAG23791.1"/>
    <property type="status" value="ALT_FRAME"/>
    <property type="molecule type" value="mRNA"/>
</dbReference>
<dbReference type="CCDS" id="CCDS31473.1"/>
<dbReference type="RefSeq" id="NP_001287650.1">
    <property type="nucleotide sequence ID" value="NM_001300721.2"/>
</dbReference>
<dbReference type="RefSeq" id="NP_001287651.1">
    <property type="nucleotide sequence ID" value="NM_001300722.1"/>
</dbReference>
<dbReference type="RefSeq" id="NP_689525.3">
    <property type="nucleotide sequence ID" value="NM_152312.4"/>
</dbReference>
<dbReference type="SMR" id="Q8N3Y3"/>
<dbReference type="BioGRID" id="125666">
    <property type="interactions" value="104"/>
</dbReference>
<dbReference type="DIP" id="DIP-48923N"/>
<dbReference type="FunCoup" id="Q8N3Y3">
    <property type="interactions" value="626"/>
</dbReference>
<dbReference type="IntAct" id="Q8N3Y3">
    <property type="interactions" value="46"/>
</dbReference>
<dbReference type="STRING" id="9606.ENSP00000385235"/>
<dbReference type="CAZy" id="GT49">
    <property type="family name" value="Glycosyltransferase Family 49"/>
</dbReference>
<dbReference type="CAZy" id="GT8">
    <property type="family name" value="Glycosyltransferase Family 8"/>
</dbReference>
<dbReference type="GlyConnect" id="1278">
    <property type="glycosylation" value="1 N-Linked glycan (1 site)"/>
</dbReference>
<dbReference type="GlyCosmos" id="Q8N3Y3">
    <property type="glycosylation" value="3 sites, 1 glycan"/>
</dbReference>
<dbReference type="GlyGen" id="Q8N3Y3">
    <property type="glycosylation" value="3 sites, 5 N-linked glycans (2 sites)"/>
</dbReference>
<dbReference type="iPTMnet" id="Q8N3Y3"/>
<dbReference type="PhosphoSitePlus" id="Q8N3Y3"/>
<dbReference type="BioMuta" id="LARGE2"/>
<dbReference type="DMDM" id="146345450"/>
<dbReference type="jPOST" id="Q8N3Y3"/>
<dbReference type="MassIVE" id="Q8N3Y3"/>
<dbReference type="PaxDb" id="9606-ENSP00000432869"/>
<dbReference type="PeptideAtlas" id="Q8N3Y3"/>
<dbReference type="ProteomicsDB" id="71849"/>
<dbReference type="Antibodypedia" id="64472">
    <property type="antibodies" value="15 antibodies from 8 providers"/>
</dbReference>
<dbReference type="DNASU" id="120071"/>
<dbReference type="Ensembl" id="ENST00000325468.9">
    <property type="protein sequence ID" value="ENSP00000324570.5"/>
    <property type="gene ID" value="ENSG00000165905.18"/>
</dbReference>
<dbReference type="Ensembl" id="ENST00000401752.6">
    <property type="protein sequence ID" value="ENSP00000385235.1"/>
    <property type="gene ID" value="ENSG00000165905.18"/>
</dbReference>
<dbReference type="Ensembl" id="ENST00000531526.5">
    <property type="protein sequence ID" value="ENSP00000432869.1"/>
    <property type="gene ID" value="ENSG00000165905.18"/>
</dbReference>
<dbReference type="GeneID" id="120071"/>
<dbReference type="KEGG" id="hsa:120071"/>
<dbReference type="MANE-Select" id="ENST00000401752.6">
    <property type="protein sequence ID" value="ENSP00000385235.1"/>
    <property type="RefSeq nucleotide sequence ID" value="NM_001300721.2"/>
    <property type="RefSeq protein sequence ID" value="NP_001287650.1"/>
</dbReference>
<dbReference type="UCSC" id="uc001nbv.1">
    <property type="organism name" value="human"/>
</dbReference>
<dbReference type="AGR" id="HGNC:16522"/>
<dbReference type="CTD" id="120071"/>
<dbReference type="DisGeNET" id="120071"/>
<dbReference type="GeneCards" id="LARGE2"/>
<dbReference type="HGNC" id="HGNC:16522">
    <property type="gene designation" value="LARGE2"/>
</dbReference>
<dbReference type="HPA" id="ENSG00000165905">
    <property type="expression patterns" value="Tissue enhanced (placenta)"/>
</dbReference>
<dbReference type="MIM" id="609709">
    <property type="type" value="gene"/>
</dbReference>
<dbReference type="neXtProt" id="NX_Q8N3Y3"/>
<dbReference type="OpenTargets" id="ENSG00000165905"/>
<dbReference type="PharmGKB" id="PA142671704"/>
<dbReference type="VEuPathDB" id="HostDB:ENSG00000165905"/>
<dbReference type="eggNOG" id="KOG3765">
    <property type="taxonomic scope" value="Eukaryota"/>
</dbReference>
<dbReference type="GeneTree" id="ENSGT00940000158758"/>
<dbReference type="InParanoid" id="Q8N3Y3"/>
<dbReference type="OMA" id="LPCIWNV"/>
<dbReference type="OrthoDB" id="411524at2759"/>
<dbReference type="PAN-GO" id="Q8N3Y3">
    <property type="GO annotations" value="4 GO annotations based on evolutionary models"/>
</dbReference>
<dbReference type="PhylomeDB" id="Q8N3Y3"/>
<dbReference type="TreeFam" id="TF319168"/>
<dbReference type="BioCyc" id="MetaCyc:ENSG00000165905-MONOMER"/>
<dbReference type="PathwayCommons" id="Q8N3Y3"/>
<dbReference type="Reactome" id="R-HSA-5173105">
    <property type="pathway name" value="O-linked glycosylation"/>
</dbReference>
<dbReference type="SignaLink" id="Q8N3Y3"/>
<dbReference type="UniPathway" id="UPA00378"/>
<dbReference type="BioGRID-ORCS" id="120071">
    <property type="hits" value="12 hits in 1153 CRISPR screens"/>
</dbReference>
<dbReference type="GenomeRNAi" id="120071"/>
<dbReference type="Pharos" id="Q8N3Y3">
    <property type="development level" value="Tbio"/>
</dbReference>
<dbReference type="PRO" id="PR:Q8N3Y3"/>
<dbReference type="Proteomes" id="UP000005640">
    <property type="component" value="Chromosome 11"/>
</dbReference>
<dbReference type="RNAct" id="Q8N3Y3">
    <property type="molecule type" value="protein"/>
</dbReference>
<dbReference type="Bgee" id="ENSG00000165905">
    <property type="expression patterns" value="Expressed in lower esophagus mucosa and 142 other cell types or tissues"/>
</dbReference>
<dbReference type="ExpressionAtlas" id="Q8N3Y3">
    <property type="expression patterns" value="baseline and differential"/>
</dbReference>
<dbReference type="GO" id="GO:0005794">
    <property type="term" value="C:Golgi apparatus"/>
    <property type="evidence" value="ECO:0000318"/>
    <property type="project" value="GO_Central"/>
</dbReference>
<dbReference type="GO" id="GO:0000139">
    <property type="term" value="C:Golgi membrane"/>
    <property type="evidence" value="ECO:0000304"/>
    <property type="project" value="Reactome"/>
</dbReference>
<dbReference type="GO" id="GO:0015020">
    <property type="term" value="F:glucuronosyltransferase activity"/>
    <property type="evidence" value="ECO:0000250"/>
    <property type="project" value="UniProtKB"/>
</dbReference>
<dbReference type="GO" id="GO:0030145">
    <property type="term" value="F:manganese ion binding"/>
    <property type="evidence" value="ECO:0000304"/>
    <property type="project" value="UniProtKB"/>
</dbReference>
<dbReference type="GO" id="GO:0035252">
    <property type="term" value="F:UDP-xylosyltransferase activity"/>
    <property type="evidence" value="ECO:0000304"/>
    <property type="project" value="Reactome"/>
</dbReference>
<dbReference type="GO" id="GO:0042285">
    <property type="term" value="F:xylosyltransferase activity"/>
    <property type="evidence" value="ECO:0000250"/>
    <property type="project" value="UniProtKB"/>
</dbReference>
<dbReference type="GO" id="GO:0046716">
    <property type="term" value="P:muscle cell cellular homeostasis"/>
    <property type="evidence" value="ECO:0000250"/>
    <property type="project" value="UniProtKB"/>
</dbReference>
<dbReference type="GO" id="GO:0006493">
    <property type="term" value="P:protein O-linked glycosylation"/>
    <property type="evidence" value="ECO:0000304"/>
    <property type="project" value="Reactome"/>
</dbReference>
<dbReference type="GO" id="GO:0035269">
    <property type="term" value="P:protein O-linked mannosylation"/>
    <property type="evidence" value="ECO:0000314"/>
    <property type="project" value="UniProtKB"/>
</dbReference>
<dbReference type="CDD" id="cd06431">
    <property type="entry name" value="GT8_LARGE_C"/>
    <property type="match status" value="1"/>
</dbReference>
<dbReference type="FunFam" id="3.90.550.10:FF:000229">
    <property type="entry name" value="Glycosyltransferase-like protein LARGE"/>
    <property type="match status" value="1"/>
</dbReference>
<dbReference type="FunFam" id="3.90.550.10:FF:000016">
    <property type="entry name" value="LARGE xylosyl- and glucuronyltransferase 2"/>
    <property type="match status" value="1"/>
</dbReference>
<dbReference type="Gene3D" id="3.90.550.10">
    <property type="entry name" value="Spore Coat Polysaccharide Biosynthesis Protein SpsA, Chain A"/>
    <property type="match status" value="1"/>
</dbReference>
<dbReference type="InterPro" id="IPR002495">
    <property type="entry name" value="Glyco_trans_8"/>
</dbReference>
<dbReference type="InterPro" id="IPR029044">
    <property type="entry name" value="Nucleotide-diphossugar_trans"/>
</dbReference>
<dbReference type="InterPro" id="IPR051292">
    <property type="entry name" value="Xyl/GlcA_transferase"/>
</dbReference>
<dbReference type="PANTHER" id="PTHR12270">
    <property type="entry name" value="GLYCOSYLTRANSFERASE-RELATED"/>
    <property type="match status" value="1"/>
</dbReference>
<dbReference type="PANTHER" id="PTHR12270:SF23">
    <property type="entry name" value="XYLOSYL- AND GLUCURONYLTRANSFERASE LARGE2"/>
    <property type="match status" value="1"/>
</dbReference>
<dbReference type="Pfam" id="PF13896">
    <property type="entry name" value="Glyco_transf_49"/>
    <property type="match status" value="2"/>
</dbReference>
<dbReference type="Pfam" id="PF01501">
    <property type="entry name" value="Glyco_transf_8"/>
    <property type="match status" value="1"/>
</dbReference>
<dbReference type="SUPFAM" id="SSF53448">
    <property type="entry name" value="Nucleotide-diphospho-sugar transferases"/>
    <property type="match status" value="1"/>
</dbReference>